<gene>
    <name evidence="1" type="primary">xseA</name>
    <name type="ordered locus">SPJ_1125</name>
</gene>
<evidence type="ECO:0000255" key="1">
    <source>
        <dbReference type="HAMAP-Rule" id="MF_00378"/>
    </source>
</evidence>
<dbReference type="EC" id="3.1.11.6" evidence="1"/>
<dbReference type="EMBL" id="CP000919">
    <property type="protein sequence ID" value="ACO18496.1"/>
    <property type="molecule type" value="Genomic_DNA"/>
</dbReference>
<dbReference type="RefSeq" id="WP_000417468.1">
    <property type="nucleotide sequence ID" value="NC_012466.1"/>
</dbReference>
<dbReference type="SMR" id="C1CEH0"/>
<dbReference type="KEGG" id="sjj:SPJ_1125"/>
<dbReference type="HOGENOM" id="CLU_023625_3_1_9"/>
<dbReference type="Proteomes" id="UP000002206">
    <property type="component" value="Chromosome"/>
</dbReference>
<dbReference type="GO" id="GO:0005737">
    <property type="term" value="C:cytoplasm"/>
    <property type="evidence" value="ECO:0007669"/>
    <property type="project" value="UniProtKB-SubCell"/>
</dbReference>
<dbReference type="GO" id="GO:0009318">
    <property type="term" value="C:exodeoxyribonuclease VII complex"/>
    <property type="evidence" value="ECO:0007669"/>
    <property type="project" value="InterPro"/>
</dbReference>
<dbReference type="GO" id="GO:0008855">
    <property type="term" value="F:exodeoxyribonuclease VII activity"/>
    <property type="evidence" value="ECO:0007669"/>
    <property type="project" value="UniProtKB-UniRule"/>
</dbReference>
<dbReference type="GO" id="GO:0003676">
    <property type="term" value="F:nucleic acid binding"/>
    <property type="evidence" value="ECO:0007669"/>
    <property type="project" value="InterPro"/>
</dbReference>
<dbReference type="GO" id="GO:0006308">
    <property type="term" value="P:DNA catabolic process"/>
    <property type="evidence" value="ECO:0007669"/>
    <property type="project" value="UniProtKB-UniRule"/>
</dbReference>
<dbReference type="CDD" id="cd04489">
    <property type="entry name" value="ExoVII_LU_OBF"/>
    <property type="match status" value="1"/>
</dbReference>
<dbReference type="HAMAP" id="MF_00378">
    <property type="entry name" value="Exonuc_7_L"/>
    <property type="match status" value="1"/>
</dbReference>
<dbReference type="InterPro" id="IPR003753">
    <property type="entry name" value="Exonuc_VII_L"/>
</dbReference>
<dbReference type="InterPro" id="IPR020579">
    <property type="entry name" value="Exonuc_VII_lsu_C"/>
</dbReference>
<dbReference type="InterPro" id="IPR025824">
    <property type="entry name" value="OB-fold_nuc-bd_dom"/>
</dbReference>
<dbReference type="NCBIfam" id="TIGR00237">
    <property type="entry name" value="xseA"/>
    <property type="match status" value="1"/>
</dbReference>
<dbReference type="PANTHER" id="PTHR30008">
    <property type="entry name" value="EXODEOXYRIBONUCLEASE 7 LARGE SUBUNIT"/>
    <property type="match status" value="1"/>
</dbReference>
<dbReference type="PANTHER" id="PTHR30008:SF0">
    <property type="entry name" value="EXODEOXYRIBONUCLEASE 7 LARGE SUBUNIT"/>
    <property type="match status" value="1"/>
</dbReference>
<dbReference type="Pfam" id="PF02601">
    <property type="entry name" value="Exonuc_VII_L"/>
    <property type="match status" value="1"/>
</dbReference>
<dbReference type="Pfam" id="PF13742">
    <property type="entry name" value="tRNA_anti_2"/>
    <property type="match status" value="1"/>
</dbReference>
<keyword id="KW-0963">Cytoplasm</keyword>
<keyword id="KW-0269">Exonuclease</keyword>
<keyword id="KW-0378">Hydrolase</keyword>
<keyword id="KW-0540">Nuclease</keyword>
<feature type="chain" id="PRO_1000200683" description="Exodeoxyribonuclease 7 large subunit">
    <location>
        <begin position="1"/>
        <end position="446"/>
    </location>
</feature>
<comment type="function">
    <text evidence="1">Bidirectionally degrades single-stranded DNA into large acid-insoluble oligonucleotides, which are then degraded further into small acid-soluble oligonucleotides.</text>
</comment>
<comment type="catalytic activity">
    <reaction evidence="1">
        <text>Exonucleolytic cleavage in either 5'- to 3'- or 3'- to 5'-direction to yield nucleoside 5'-phosphates.</text>
        <dbReference type="EC" id="3.1.11.6"/>
    </reaction>
</comment>
<comment type="subunit">
    <text evidence="1">Heterooligomer composed of large and small subunits.</text>
</comment>
<comment type="subcellular location">
    <subcellularLocation>
        <location evidence="1">Cytoplasm</location>
    </subcellularLocation>
</comment>
<comment type="similarity">
    <text evidence="1">Belongs to the XseA family.</text>
</comment>
<organism>
    <name type="scientific">Streptococcus pneumoniae (strain JJA)</name>
    <dbReference type="NCBI Taxonomy" id="488222"/>
    <lineage>
        <taxon>Bacteria</taxon>
        <taxon>Bacillati</taxon>
        <taxon>Bacillota</taxon>
        <taxon>Bacilli</taxon>
        <taxon>Lactobacillales</taxon>
        <taxon>Streptococcaceae</taxon>
        <taxon>Streptococcus</taxon>
    </lineage>
</organism>
<name>EX7L_STRZJ</name>
<protein>
    <recommendedName>
        <fullName evidence="1">Exodeoxyribonuclease 7 large subunit</fullName>
        <ecNumber evidence="1">3.1.11.6</ecNumber>
    </recommendedName>
    <alternativeName>
        <fullName evidence="1">Exodeoxyribonuclease VII large subunit</fullName>
        <shortName evidence="1">Exonuclease VII large subunit</shortName>
    </alternativeName>
</protein>
<proteinExistence type="inferred from homology"/>
<accession>C1CEH0</accession>
<reference key="1">
    <citation type="journal article" date="2010" name="Genome Biol.">
        <title>Structure and dynamics of the pan-genome of Streptococcus pneumoniae and closely related species.</title>
        <authorList>
            <person name="Donati C."/>
            <person name="Hiller N.L."/>
            <person name="Tettelin H."/>
            <person name="Muzzi A."/>
            <person name="Croucher N.J."/>
            <person name="Angiuoli S.V."/>
            <person name="Oggioni M."/>
            <person name="Dunning Hotopp J.C."/>
            <person name="Hu F.Z."/>
            <person name="Riley D.R."/>
            <person name="Covacci A."/>
            <person name="Mitchell T.J."/>
            <person name="Bentley S.D."/>
            <person name="Kilian M."/>
            <person name="Ehrlich G.D."/>
            <person name="Rappuoli R."/>
            <person name="Moxon E.R."/>
            <person name="Masignani V."/>
        </authorList>
    </citation>
    <scope>NUCLEOTIDE SEQUENCE [LARGE SCALE GENOMIC DNA]</scope>
    <source>
        <strain>JJA</strain>
    </source>
</reference>
<sequence length="446" mass="50524">MEKYLSVTTLTKYLKMKFDKDPYLERVYLTGQVSNFRKRPTHQYFSLKDDHAVIQATIWSGIYQKLGFDLEEGMKINVIGRVQVYEPSGSYSIIIEKAEPDGVGALAIQFEQLKKKLTEEGLFQERFKQALPQFSKRIGVVTSRSGAVIRDIITTVSRRFPGVDILLYPTKVQGEGAAEEIARNIARANQRDDLDLLIIGRGGGSIEDLWAFNEEIVVRAIFESRLPVISSVGHETDVTLADFVADRRAATPTAAAELATPVTKLDVLTHLQNQEKRMATAVRNVLSKKQEALKKCSQSVIFRQPERLYDGYLQRLDQLQLRLKQSLRTRISDNKQLVQARTHQLVQLSPVTKIQRYQDRLGQLDKLLGSQMALVYDAKVAEAKRLSEALLMLDTSRIVARGYAIVKKEESIVDSVESLKKKDQVTLLMRDGQVELEVKDVKTKEI</sequence>